<proteinExistence type="inferred from homology"/>
<dbReference type="EMBL" id="CR382134">
    <property type="protein sequence ID" value="CAG85035.1"/>
    <property type="molecule type" value="Genomic_DNA"/>
</dbReference>
<dbReference type="RefSeq" id="XP_457049.1">
    <property type="nucleotide sequence ID" value="XM_457049.1"/>
</dbReference>
<dbReference type="SMR" id="Q6BXM0"/>
<dbReference type="FunCoup" id="Q6BXM0">
    <property type="interactions" value="59"/>
</dbReference>
<dbReference type="STRING" id="284592.Q6BXM0"/>
<dbReference type="GeneID" id="2913110"/>
<dbReference type="KEGG" id="dha:DEHA2B01892g"/>
<dbReference type="VEuPathDB" id="FungiDB:DEHA2B01892g"/>
<dbReference type="eggNOG" id="ENOG502SBNA">
    <property type="taxonomic scope" value="Eukaryota"/>
</dbReference>
<dbReference type="HOGENOM" id="CLU_154717_1_0_1"/>
<dbReference type="InParanoid" id="Q6BXM0"/>
<dbReference type="OMA" id="VMAFMED"/>
<dbReference type="OrthoDB" id="160405at2759"/>
<dbReference type="Proteomes" id="UP000000599">
    <property type="component" value="Chromosome B"/>
</dbReference>
<dbReference type="GO" id="GO:0005789">
    <property type="term" value="C:endoplasmic reticulum membrane"/>
    <property type="evidence" value="ECO:0007669"/>
    <property type="project" value="UniProtKB-SubCell"/>
</dbReference>
<dbReference type="GO" id="GO:0033116">
    <property type="term" value="C:endoplasmic reticulum-Golgi intermediate compartment membrane"/>
    <property type="evidence" value="ECO:0007669"/>
    <property type="project" value="UniProtKB-SubCell"/>
</dbReference>
<dbReference type="GO" id="GO:0012507">
    <property type="term" value="C:ER to Golgi transport vesicle membrane"/>
    <property type="evidence" value="ECO:0007669"/>
    <property type="project" value="UniProtKB-SubCell"/>
</dbReference>
<dbReference type="GO" id="GO:0070072">
    <property type="term" value="P:vacuolar proton-transporting V-type ATPase complex assembly"/>
    <property type="evidence" value="ECO:0007669"/>
    <property type="project" value="UniProtKB-UniRule"/>
</dbReference>
<dbReference type="HAMAP" id="MF_03058">
    <property type="entry name" value="VMA21"/>
    <property type="match status" value="1"/>
</dbReference>
<dbReference type="InterPro" id="IPR019013">
    <property type="entry name" value="Vma21"/>
</dbReference>
<dbReference type="Pfam" id="PF09446">
    <property type="entry name" value="VMA21"/>
    <property type="match status" value="1"/>
</dbReference>
<comment type="function">
    <text evidence="1">Required for the assembly of the V0 complex of the vacuolar ATPase (V-ATPase) in the endoplasmic reticulum.</text>
</comment>
<comment type="subcellular location">
    <subcellularLocation>
        <location evidence="1">Endoplasmic reticulum membrane</location>
        <topology evidence="1">Multi-pass membrane protein</topology>
    </subcellularLocation>
    <subcellularLocation>
        <location evidence="1">Endoplasmic reticulum-Golgi intermediate compartment membrane</location>
        <topology evidence="1">Multi-pass membrane protein</topology>
    </subcellularLocation>
    <subcellularLocation>
        <location evidence="1">Cytoplasmic vesicle</location>
        <location evidence="1">COPII-coated vesicle membrane</location>
        <topology evidence="1">Multi-pass membrane protein</topology>
    </subcellularLocation>
</comment>
<comment type="similarity">
    <text evidence="1">Belongs to the VMA21 family.</text>
</comment>
<evidence type="ECO:0000255" key="1">
    <source>
        <dbReference type="HAMAP-Rule" id="MF_03058"/>
    </source>
</evidence>
<name>VMA21_DEBHA</name>
<feature type="chain" id="PRO_0000377587" description="Vacuolar ATPase assembly integral membrane protein VMA21">
    <location>
        <begin position="1"/>
        <end position="78"/>
    </location>
</feature>
<feature type="topological domain" description="Cytoplasmic" evidence="1">
    <location>
        <begin position="1"/>
        <end position="14"/>
    </location>
</feature>
<feature type="transmembrane region" description="Helical" evidence="1">
    <location>
        <begin position="15"/>
        <end position="35"/>
    </location>
</feature>
<feature type="topological domain" description="Lumenal" evidence="1">
    <location>
        <begin position="36"/>
        <end position="38"/>
    </location>
</feature>
<feature type="transmembrane region" description="Helical" evidence="1">
    <location>
        <begin position="39"/>
        <end position="59"/>
    </location>
</feature>
<feature type="topological domain" description="Cytoplasmic" evidence="1">
    <location>
        <begin position="60"/>
        <end position="78"/>
    </location>
</feature>
<feature type="short sequence motif" description="Prevents secretion from ER">
    <location>
        <begin position="75"/>
        <end position="78"/>
    </location>
</feature>
<reference key="1">
    <citation type="journal article" date="2004" name="Nature">
        <title>Genome evolution in yeasts.</title>
        <authorList>
            <person name="Dujon B."/>
            <person name="Sherman D."/>
            <person name="Fischer G."/>
            <person name="Durrens P."/>
            <person name="Casaregola S."/>
            <person name="Lafontaine I."/>
            <person name="de Montigny J."/>
            <person name="Marck C."/>
            <person name="Neuveglise C."/>
            <person name="Talla E."/>
            <person name="Goffard N."/>
            <person name="Frangeul L."/>
            <person name="Aigle M."/>
            <person name="Anthouard V."/>
            <person name="Babour A."/>
            <person name="Barbe V."/>
            <person name="Barnay S."/>
            <person name="Blanchin S."/>
            <person name="Beckerich J.-M."/>
            <person name="Beyne E."/>
            <person name="Bleykasten C."/>
            <person name="Boisrame A."/>
            <person name="Boyer J."/>
            <person name="Cattolico L."/>
            <person name="Confanioleri F."/>
            <person name="de Daruvar A."/>
            <person name="Despons L."/>
            <person name="Fabre E."/>
            <person name="Fairhead C."/>
            <person name="Ferry-Dumazet H."/>
            <person name="Groppi A."/>
            <person name="Hantraye F."/>
            <person name="Hennequin C."/>
            <person name="Jauniaux N."/>
            <person name="Joyet P."/>
            <person name="Kachouri R."/>
            <person name="Kerrest A."/>
            <person name="Koszul R."/>
            <person name="Lemaire M."/>
            <person name="Lesur I."/>
            <person name="Ma L."/>
            <person name="Muller H."/>
            <person name="Nicaud J.-M."/>
            <person name="Nikolski M."/>
            <person name="Oztas S."/>
            <person name="Ozier-Kalogeropoulos O."/>
            <person name="Pellenz S."/>
            <person name="Potier S."/>
            <person name="Richard G.-F."/>
            <person name="Straub M.-L."/>
            <person name="Suleau A."/>
            <person name="Swennen D."/>
            <person name="Tekaia F."/>
            <person name="Wesolowski-Louvel M."/>
            <person name="Westhof E."/>
            <person name="Wirth B."/>
            <person name="Zeniou-Meyer M."/>
            <person name="Zivanovic Y."/>
            <person name="Bolotin-Fukuhara M."/>
            <person name="Thierry A."/>
            <person name="Bouchier C."/>
            <person name="Caudron B."/>
            <person name="Scarpelli C."/>
            <person name="Gaillardin C."/>
            <person name="Weissenbach J."/>
            <person name="Wincker P."/>
            <person name="Souciet J.-L."/>
        </authorList>
    </citation>
    <scope>NUCLEOTIDE SEQUENCE [LARGE SCALE GENOMIC DNA]</scope>
    <source>
        <strain>ATCC 36239 / CBS 767 / BCRC 21394 / JCM 1990 / NBRC 0083 / IGC 2968</strain>
    </source>
</reference>
<gene>
    <name evidence="1" type="primary">VMA21</name>
    <name type="ordered locus">DEHA2B01892g</name>
</gene>
<keyword id="KW-0968">Cytoplasmic vesicle</keyword>
<keyword id="KW-0256">Endoplasmic reticulum</keyword>
<keyword id="KW-0472">Membrane</keyword>
<keyword id="KW-1185">Reference proteome</keyword>
<keyword id="KW-0812">Transmembrane</keyword>
<keyword id="KW-1133">Transmembrane helix</keyword>
<organism>
    <name type="scientific">Debaryomyces hansenii (strain ATCC 36239 / CBS 767 / BCRC 21394 / JCM 1990 / NBRC 0083 / IGC 2968)</name>
    <name type="common">Yeast</name>
    <name type="synonym">Torulaspora hansenii</name>
    <dbReference type="NCBI Taxonomy" id="284592"/>
    <lineage>
        <taxon>Eukaryota</taxon>
        <taxon>Fungi</taxon>
        <taxon>Dikarya</taxon>
        <taxon>Ascomycota</taxon>
        <taxon>Saccharomycotina</taxon>
        <taxon>Pichiomycetes</taxon>
        <taxon>Debaryomycetaceae</taxon>
        <taxon>Debaryomyces</taxon>
    </lineage>
</organism>
<protein>
    <recommendedName>
        <fullName evidence="1">Vacuolar ATPase assembly integral membrane protein VMA21</fullName>
    </recommendedName>
</protein>
<accession>Q6BXM0</accession>
<sequence length="78" mass="8489">MPADIPKSVVQKLVFFTAAMIICPVATFFICQYLFSNNAIISGGVSALVANIVLIGYVVAAFMEDTTEQEPEETKKSR</sequence>